<protein>
    <recommendedName>
        <fullName evidence="1">Phosphoribosylformylglycinamidine cyclo-ligase</fullName>
        <ecNumber evidence="1">6.3.3.1</ecNumber>
    </recommendedName>
    <alternativeName>
        <fullName evidence="1">AIR synthase</fullName>
    </alternativeName>
    <alternativeName>
        <fullName evidence="1">AIRS</fullName>
    </alternativeName>
    <alternativeName>
        <fullName evidence="1">Phosphoribosyl-aminoimidazole synthetase</fullName>
    </alternativeName>
</protein>
<name>PUR5_KLEP3</name>
<organism>
    <name type="scientific">Klebsiella pneumoniae (strain 342)</name>
    <dbReference type="NCBI Taxonomy" id="507522"/>
    <lineage>
        <taxon>Bacteria</taxon>
        <taxon>Pseudomonadati</taxon>
        <taxon>Pseudomonadota</taxon>
        <taxon>Gammaproteobacteria</taxon>
        <taxon>Enterobacterales</taxon>
        <taxon>Enterobacteriaceae</taxon>
        <taxon>Klebsiella/Raoultella group</taxon>
        <taxon>Klebsiella</taxon>
        <taxon>Klebsiella pneumoniae complex</taxon>
    </lineage>
</organism>
<reference key="1">
    <citation type="journal article" date="2008" name="PLoS Genet.">
        <title>Complete genome sequence of the N2-fixing broad host range endophyte Klebsiella pneumoniae 342 and virulence predictions verified in mice.</title>
        <authorList>
            <person name="Fouts D.E."/>
            <person name="Tyler H.L."/>
            <person name="DeBoy R.T."/>
            <person name="Daugherty S."/>
            <person name="Ren Q."/>
            <person name="Badger J.H."/>
            <person name="Durkin A.S."/>
            <person name="Huot H."/>
            <person name="Shrivastava S."/>
            <person name="Kothari S."/>
            <person name="Dodson R.J."/>
            <person name="Mohamoud Y."/>
            <person name="Khouri H."/>
            <person name="Roesch L.F.W."/>
            <person name="Krogfelt K.A."/>
            <person name="Struve C."/>
            <person name="Triplett E.W."/>
            <person name="Methe B.A."/>
        </authorList>
    </citation>
    <scope>NUCLEOTIDE SEQUENCE [LARGE SCALE GENOMIC DNA]</scope>
    <source>
        <strain>342</strain>
    </source>
</reference>
<proteinExistence type="inferred from homology"/>
<gene>
    <name evidence="1" type="primary">purM</name>
    <name type="ordered locus">KPK_1310</name>
</gene>
<feature type="chain" id="PRO_1000193028" description="Phosphoribosylformylglycinamidine cyclo-ligase">
    <location>
        <begin position="1"/>
        <end position="345"/>
    </location>
</feature>
<sequence length="345" mass="36693">MTDKTSLSYKDAGVDIDAGNALVDRIKGVVKKTRRPEVMGGLGGFGALCALPQKYREPVLVSGTDGVGTKLRLAMDLKRHDTIGIDLVAMCVNDLVVQGAEPLFFLDYYATGKLDVDTAASVINGIAEGCLQSGCALVGGETAEMPGMYHGEDYDVAGFCVGVVEKSEIIDGSKVADGDVLVALASSGPHSNGYSLVRKIIEVSGVDPQTTDLDGKPLADHLLAPTRIYVKSVLDLIASVDVHAIAHLTGGGFWENIPRVLPDNTQAIIDESSWQWPSVFNWLQTAGNVSQHEMYRTFNCGVGMVIALPAAEADKAIALLNEKGENAWKIGYIKASDSEQRVVIA</sequence>
<keyword id="KW-0067">ATP-binding</keyword>
<keyword id="KW-0963">Cytoplasm</keyword>
<keyword id="KW-0436">Ligase</keyword>
<keyword id="KW-0547">Nucleotide-binding</keyword>
<keyword id="KW-0658">Purine biosynthesis</keyword>
<evidence type="ECO:0000255" key="1">
    <source>
        <dbReference type="HAMAP-Rule" id="MF_00741"/>
    </source>
</evidence>
<accession>B5XNQ0</accession>
<comment type="catalytic activity">
    <reaction evidence="1">
        <text>2-formamido-N(1)-(5-O-phospho-beta-D-ribosyl)acetamidine + ATP = 5-amino-1-(5-phospho-beta-D-ribosyl)imidazole + ADP + phosphate + H(+)</text>
        <dbReference type="Rhea" id="RHEA:23032"/>
        <dbReference type="ChEBI" id="CHEBI:15378"/>
        <dbReference type="ChEBI" id="CHEBI:30616"/>
        <dbReference type="ChEBI" id="CHEBI:43474"/>
        <dbReference type="ChEBI" id="CHEBI:137981"/>
        <dbReference type="ChEBI" id="CHEBI:147287"/>
        <dbReference type="ChEBI" id="CHEBI:456216"/>
        <dbReference type="EC" id="6.3.3.1"/>
    </reaction>
</comment>
<comment type="pathway">
    <text evidence="1">Purine metabolism; IMP biosynthesis via de novo pathway; 5-amino-1-(5-phospho-D-ribosyl)imidazole from N(2)-formyl-N(1)-(5-phospho-D-ribosyl)glycinamide: step 2/2.</text>
</comment>
<comment type="subcellular location">
    <subcellularLocation>
        <location evidence="1">Cytoplasm</location>
    </subcellularLocation>
</comment>
<comment type="similarity">
    <text evidence="1">Belongs to the AIR synthase family.</text>
</comment>
<dbReference type="EC" id="6.3.3.1" evidence="1"/>
<dbReference type="EMBL" id="CP000964">
    <property type="protein sequence ID" value="ACI07058.1"/>
    <property type="molecule type" value="Genomic_DNA"/>
</dbReference>
<dbReference type="SMR" id="B5XNQ0"/>
<dbReference type="KEGG" id="kpe:KPK_1310"/>
<dbReference type="HOGENOM" id="CLU_047116_0_0_6"/>
<dbReference type="UniPathway" id="UPA00074">
    <property type="reaction ID" value="UER00129"/>
</dbReference>
<dbReference type="Proteomes" id="UP000001734">
    <property type="component" value="Chromosome"/>
</dbReference>
<dbReference type="GO" id="GO:0005829">
    <property type="term" value="C:cytosol"/>
    <property type="evidence" value="ECO:0007669"/>
    <property type="project" value="TreeGrafter"/>
</dbReference>
<dbReference type="GO" id="GO:0005524">
    <property type="term" value="F:ATP binding"/>
    <property type="evidence" value="ECO:0007669"/>
    <property type="project" value="UniProtKB-KW"/>
</dbReference>
<dbReference type="GO" id="GO:0004637">
    <property type="term" value="F:phosphoribosylamine-glycine ligase activity"/>
    <property type="evidence" value="ECO:0007669"/>
    <property type="project" value="TreeGrafter"/>
</dbReference>
<dbReference type="GO" id="GO:0004641">
    <property type="term" value="F:phosphoribosylformylglycinamidine cyclo-ligase activity"/>
    <property type="evidence" value="ECO:0007669"/>
    <property type="project" value="UniProtKB-UniRule"/>
</dbReference>
<dbReference type="GO" id="GO:0006189">
    <property type="term" value="P:'de novo' IMP biosynthetic process"/>
    <property type="evidence" value="ECO:0007669"/>
    <property type="project" value="UniProtKB-UniRule"/>
</dbReference>
<dbReference type="GO" id="GO:0046084">
    <property type="term" value="P:adenine biosynthetic process"/>
    <property type="evidence" value="ECO:0007669"/>
    <property type="project" value="TreeGrafter"/>
</dbReference>
<dbReference type="CDD" id="cd02196">
    <property type="entry name" value="PurM"/>
    <property type="match status" value="1"/>
</dbReference>
<dbReference type="FunFam" id="3.30.1330.10:FF:000001">
    <property type="entry name" value="Phosphoribosylformylglycinamidine cyclo-ligase"/>
    <property type="match status" value="1"/>
</dbReference>
<dbReference type="FunFam" id="3.90.650.10:FF:000001">
    <property type="entry name" value="Phosphoribosylformylglycinamidine cyclo-ligase"/>
    <property type="match status" value="1"/>
</dbReference>
<dbReference type="Gene3D" id="3.90.650.10">
    <property type="entry name" value="PurM-like C-terminal domain"/>
    <property type="match status" value="1"/>
</dbReference>
<dbReference type="Gene3D" id="3.30.1330.10">
    <property type="entry name" value="PurM-like, N-terminal domain"/>
    <property type="match status" value="1"/>
</dbReference>
<dbReference type="HAMAP" id="MF_00741">
    <property type="entry name" value="AIRS"/>
    <property type="match status" value="1"/>
</dbReference>
<dbReference type="InterPro" id="IPR010918">
    <property type="entry name" value="PurM-like_C_dom"/>
</dbReference>
<dbReference type="InterPro" id="IPR036676">
    <property type="entry name" value="PurM-like_C_sf"/>
</dbReference>
<dbReference type="InterPro" id="IPR016188">
    <property type="entry name" value="PurM-like_N"/>
</dbReference>
<dbReference type="InterPro" id="IPR036921">
    <property type="entry name" value="PurM-like_N_sf"/>
</dbReference>
<dbReference type="InterPro" id="IPR004733">
    <property type="entry name" value="PurM_cligase"/>
</dbReference>
<dbReference type="NCBIfam" id="TIGR00878">
    <property type="entry name" value="purM"/>
    <property type="match status" value="1"/>
</dbReference>
<dbReference type="PANTHER" id="PTHR10520:SF12">
    <property type="entry name" value="TRIFUNCTIONAL PURINE BIOSYNTHETIC PROTEIN ADENOSINE-3"/>
    <property type="match status" value="1"/>
</dbReference>
<dbReference type="PANTHER" id="PTHR10520">
    <property type="entry name" value="TRIFUNCTIONAL PURINE BIOSYNTHETIC PROTEIN ADENOSINE-3-RELATED"/>
    <property type="match status" value="1"/>
</dbReference>
<dbReference type="Pfam" id="PF00586">
    <property type="entry name" value="AIRS"/>
    <property type="match status" value="1"/>
</dbReference>
<dbReference type="Pfam" id="PF02769">
    <property type="entry name" value="AIRS_C"/>
    <property type="match status" value="1"/>
</dbReference>
<dbReference type="SUPFAM" id="SSF56042">
    <property type="entry name" value="PurM C-terminal domain-like"/>
    <property type="match status" value="1"/>
</dbReference>
<dbReference type="SUPFAM" id="SSF55326">
    <property type="entry name" value="PurM N-terminal domain-like"/>
    <property type="match status" value="1"/>
</dbReference>